<comment type="function">
    <text evidence="1">Required for the formation of a threonylcarbamoyl group on adenosine at position 37 (t(6)A37) in tRNAs that read codons beginning with adenine. Is involved in the transfer of the threonylcarbamoyl moiety of threonylcarbamoyl-AMP (TC-AMP) to the N6 group of A37, together with TsaE and TsaB. TsaD likely plays a direct catalytic role in this reaction.</text>
</comment>
<comment type="catalytic activity">
    <reaction evidence="1">
        <text>L-threonylcarbamoyladenylate + adenosine(37) in tRNA = N(6)-L-threonylcarbamoyladenosine(37) in tRNA + AMP + H(+)</text>
        <dbReference type="Rhea" id="RHEA:37059"/>
        <dbReference type="Rhea" id="RHEA-COMP:10162"/>
        <dbReference type="Rhea" id="RHEA-COMP:10163"/>
        <dbReference type="ChEBI" id="CHEBI:15378"/>
        <dbReference type="ChEBI" id="CHEBI:73682"/>
        <dbReference type="ChEBI" id="CHEBI:74411"/>
        <dbReference type="ChEBI" id="CHEBI:74418"/>
        <dbReference type="ChEBI" id="CHEBI:456215"/>
        <dbReference type="EC" id="2.3.1.234"/>
    </reaction>
</comment>
<comment type="cofactor">
    <cofactor evidence="1">
        <name>Fe(2+)</name>
        <dbReference type="ChEBI" id="CHEBI:29033"/>
    </cofactor>
    <text evidence="1">Binds 1 Fe(2+) ion per subunit.</text>
</comment>
<comment type="subcellular location">
    <subcellularLocation>
        <location evidence="1">Cytoplasm</location>
    </subcellularLocation>
</comment>
<comment type="similarity">
    <text evidence="1">Belongs to the KAE1 / TsaD family.</text>
</comment>
<accession>Q7V660</accession>
<organism>
    <name type="scientific">Prochlorococcus marinus (strain MIT 9313)</name>
    <dbReference type="NCBI Taxonomy" id="74547"/>
    <lineage>
        <taxon>Bacteria</taxon>
        <taxon>Bacillati</taxon>
        <taxon>Cyanobacteriota</taxon>
        <taxon>Cyanophyceae</taxon>
        <taxon>Synechococcales</taxon>
        <taxon>Prochlorococcaceae</taxon>
        <taxon>Prochlorococcus</taxon>
    </lineage>
</organism>
<dbReference type="EC" id="2.3.1.234" evidence="1"/>
<dbReference type="EMBL" id="BX548175">
    <property type="protein sequence ID" value="CAE21490.1"/>
    <property type="molecule type" value="Genomic_DNA"/>
</dbReference>
<dbReference type="RefSeq" id="WP_011130683.1">
    <property type="nucleotide sequence ID" value="NC_005071.1"/>
</dbReference>
<dbReference type="SMR" id="Q7V660"/>
<dbReference type="KEGG" id="pmt:PMT_1315"/>
<dbReference type="eggNOG" id="COG0533">
    <property type="taxonomic scope" value="Bacteria"/>
</dbReference>
<dbReference type="HOGENOM" id="CLU_023208_0_2_3"/>
<dbReference type="OrthoDB" id="9806197at2"/>
<dbReference type="Proteomes" id="UP000001423">
    <property type="component" value="Chromosome"/>
</dbReference>
<dbReference type="GO" id="GO:0005737">
    <property type="term" value="C:cytoplasm"/>
    <property type="evidence" value="ECO:0007669"/>
    <property type="project" value="UniProtKB-SubCell"/>
</dbReference>
<dbReference type="GO" id="GO:0005506">
    <property type="term" value="F:iron ion binding"/>
    <property type="evidence" value="ECO:0007669"/>
    <property type="project" value="UniProtKB-UniRule"/>
</dbReference>
<dbReference type="GO" id="GO:0061711">
    <property type="term" value="F:N(6)-L-threonylcarbamoyladenine synthase activity"/>
    <property type="evidence" value="ECO:0007669"/>
    <property type="project" value="UniProtKB-EC"/>
</dbReference>
<dbReference type="GO" id="GO:0002949">
    <property type="term" value="P:tRNA threonylcarbamoyladenosine modification"/>
    <property type="evidence" value="ECO:0007669"/>
    <property type="project" value="UniProtKB-UniRule"/>
</dbReference>
<dbReference type="CDD" id="cd24133">
    <property type="entry name" value="ASKHA_NBD_TsaD_bac"/>
    <property type="match status" value="1"/>
</dbReference>
<dbReference type="FunFam" id="3.30.420.40:FF:000012">
    <property type="entry name" value="tRNA N6-adenosine threonylcarbamoyltransferase"/>
    <property type="match status" value="1"/>
</dbReference>
<dbReference type="FunFam" id="3.30.420.40:FF:000040">
    <property type="entry name" value="tRNA N6-adenosine threonylcarbamoyltransferase"/>
    <property type="match status" value="1"/>
</dbReference>
<dbReference type="Gene3D" id="3.30.420.40">
    <property type="match status" value="2"/>
</dbReference>
<dbReference type="HAMAP" id="MF_01445">
    <property type="entry name" value="TsaD"/>
    <property type="match status" value="1"/>
</dbReference>
<dbReference type="InterPro" id="IPR043129">
    <property type="entry name" value="ATPase_NBD"/>
</dbReference>
<dbReference type="InterPro" id="IPR000905">
    <property type="entry name" value="Gcp-like_dom"/>
</dbReference>
<dbReference type="InterPro" id="IPR017861">
    <property type="entry name" value="KAE1/TsaD"/>
</dbReference>
<dbReference type="InterPro" id="IPR022450">
    <property type="entry name" value="TsaD"/>
</dbReference>
<dbReference type="NCBIfam" id="TIGR00329">
    <property type="entry name" value="gcp_kae1"/>
    <property type="match status" value="1"/>
</dbReference>
<dbReference type="NCBIfam" id="TIGR03723">
    <property type="entry name" value="T6A_TsaD_YgjD"/>
    <property type="match status" value="1"/>
</dbReference>
<dbReference type="PANTHER" id="PTHR11735">
    <property type="entry name" value="TRNA N6-ADENOSINE THREONYLCARBAMOYLTRANSFERASE"/>
    <property type="match status" value="1"/>
</dbReference>
<dbReference type="PANTHER" id="PTHR11735:SF6">
    <property type="entry name" value="TRNA N6-ADENOSINE THREONYLCARBAMOYLTRANSFERASE, MITOCHONDRIAL"/>
    <property type="match status" value="1"/>
</dbReference>
<dbReference type="Pfam" id="PF00814">
    <property type="entry name" value="TsaD"/>
    <property type="match status" value="1"/>
</dbReference>
<dbReference type="PRINTS" id="PR00789">
    <property type="entry name" value="OSIALOPTASE"/>
</dbReference>
<dbReference type="SUPFAM" id="SSF53067">
    <property type="entry name" value="Actin-like ATPase domain"/>
    <property type="match status" value="2"/>
</dbReference>
<proteinExistence type="inferred from homology"/>
<evidence type="ECO:0000255" key="1">
    <source>
        <dbReference type="HAMAP-Rule" id="MF_01445"/>
    </source>
</evidence>
<protein>
    <recommendedName>
        <fullName evidence="1">tRNA N6-adenosine threonylcarbamoyltransferase</fullName>
        <ecNumber evidence="1">2.3.1.234</ecNumber>
    </recommendedName>
    <alternativeName>
        <fullName evidence="1">N6-L-threonylcarbamoyladenine synthase</fullName>
        <shortName evidence="1">t(6)A synthase</shortName>
    </alternativeName>
    <alternativeName>
        <fullName evidence="1">t(6)A37 threonylcarbamoyladenosine biosynthesis protein TsaD</fullName>
    </alternativeName>
    <alternativeName>
        <fullName evidence="1">tRNA threonylcarbamoyladenosine biosynthesis protein TsaD</fullName>
    </alternativeName>
</protein>
<feature type="chain" id="PRO_0000303482" description="tRNA N6-adenosine threonylcarbamoyltransferase">
    <location>
        <begin position="1"/>
        <end position="356"/>
    </location>
</feature>
<feature type="binding site" evidence="1">
    <location>
        <position position="115"/>
    </location>
    <ligand>
        <name>Fe cation</name>
        <dbReference type="ChEBI" id="CHEBI:24875"/>
    </ligand>
</feature>
<feature type="binding site" evidence="1">
    <location>
        <position position="119"/>
    </location>
    <ligand>
        <name>Fe cation</name>
        <dbReference type="ChEBI" id="CHEBI:24875"/>
    </ligand>
</feature>
<feature type="binding site" evidence="1">
    <location>
        <begin position="138"/>
        <end position="142"/>
    </location>
    <ligand>
        <name>substrate</name>
    </ligand>
</feature>
<feature type="binding site" evidence="1">
    <location>
        <position position="171"/>
    </location>
    <ligand>
        <name>substrate</name>
    </ligand>
</feature>
<feature type="binding site" evidence="1">
    <location>
        <position position="184"/>
    </location>
    <ligand>
        <name>substrate</name>
    </ligand>
</feature>
<feature type="binding site" evidence="1">
    <location>
        <position position="283"/>
    </location>
    <ligand>
        <name>substrate</name>
    </ligand>
</feature>
<feature type="binding site" evidence="1">
    <location>
        <position position="311"/>
    </location>
    <ligand>
        <name>Fe cation</name>
        <dbReference type="ChEBI" id="CHEBI:24875"/>
    </ligand>
</feature>
<gene>
    <name evidence="1" type="primary">tsaD</name>
    <name type="synonym">gcp</name>
    <name type="ordered locus">PMT_1315</name>
</gene>
<keyword id="KW-0012">Acyltransferase</keyword>
<keyword id="KW-0963">Cytoplasm</keyword>
<keyword id="KW-0408">Iron</keyword>
<keyword id="KW-0479">Metal-binding</keyword>
<keyword id="KW-1185">Reference proteome</keyword>
<keyword id="KW-0808">Transferase</keyword>
<keyword id="KW-0819">tRNA processing</keyword>
<reference key="1">
    <citation type="journal article" date="2003" name="Nature">
        <title>Genome divergence in two Prochlorococcus ecotypes reflects oceanic niche differentiation.</title>
        <authorList>
            <person name="Rocap G."/>
            <person name="Larimer F.W."/>
            <person name="Lamerdin J.E."/>
            <person name="Malfatti S."/>
            <person name="Chain P."/>
            <person name="Ahlgren N.A."/>
            <person name="Arellano A."/>
            <person name="Coleman M."/>
            <person name="Hauser L."/>
            <person name="Hess W.R."/>
            <person name="Johnson Z.I."/>
            <person name="Land M.L."/>
            <person name="Lindell D."/>
            <person name="Post A.F."/>
            <person name="Regala W."/>
            <person name="Shah M."/>
            <person name="Shaw S.L."/>
            <person name="Steglich C."/>
            <person name="Sullivan M.B."/>
            <person name="Ting C.S."/>
            <person name="Tolonen A."/>
            <person name="Webb E.A."/>
            <person name="Zinser E.R."/>
            <person name="Chisholm S.W."/>
        </authorList>
    </citation>
    <scope>NUCLEOTIDE SEQUENCE [LARGE SCALE GENOMIC DNA]</scope>
    <source>
        <strain>MIT 9313</strain>
    </source>
</reference>
<sequence length="356" mass="37552">MPTVLALETSCDESAAAVLRLNNGCLQVIASRIASQVEKHAQWGGVVPEVASRLHVEALPHLVEEVLQEAGQSMARFDAVAATVTPGLAGALMVGSVTGRSLAALHALPFFGIHHLEGHLASVRLAEHPPRPPYLVLLVSGGHTELIRVGAESEMVRLGRSHDDAAGEAFDKVGRLLGLAYPGGPAIQALAATGDSGRFSLPKGRVSKPGGGFHPYDFSFSGLKTAMLRLVQALSEADEDLPRADLAASFEQVVADVLVERSLLCANDQGLKTVVMVGGVAANRRLRELMSKRGQEQGIEVHTAPLRYCTDNAAMIGAAALQRLVSGVNGSSLELGVAARWPLDKTEVLYHSPPPF</sequence>
<name>TSAD_PROMM</name>